<proteinExistence type="inferred from homology"/>
<accession>Q57RY1</accession>
<gene>
    <name evidence="1" type="primary">entS</name>
    <name type="ordered locus">SCH_0624</name>
</gene>
<dbReference type="EMBL" id="AE017220">
    <property type="protein sequence ID" value="AAX64530.1"/>
    <property type="molecule type" value="Genomic_DNA"/>
</dbReference>
<dbReference type="RefSeq" id="WP_001081671.1">
    <property type="nucleotide sequence ID" value="NC_006905.1"/>
</dbReference>
<dbReference type="SMR" id="Q57RY1"/>
<dbReference type="KEGG" id="sec:SCH_0624"/>
<dbReference type="HOGENOM" id="CLU_034180_11_0_6"/>
<dbReference type="Proteomes" id="UP000000538">
    <property type="component" value="Chromosome"/>
</dbReference>
<dbReference type="GO" id="GO:0005886">
    <property type="term" value="C:plasma membrane"/>
    <property type="evidence" value="ECO:0007669"/>
    <property type="project" value="UniProtKB-SubCell"/>
</dbReference>
<dbReference type="GO" id="GO:0042931">
    <property type="term" value="F:enterobactin transmembrane transporter activity"/>
    <property type="evidence" value="ECO:0007669"/>
    <property type="project" value="InterPro"/>
</dbReference>
<dbReference type="CDD" id="cd06173">
    <property type="entry name" value="MFS_MefA_like"/>
    <property type="match status" value="1"/>
</dbReference>
<dbReference type="FunFam" id="1.20.1250.20:FF:000056">
    <property type="entry name" value="Enterobactin exporter EntS"/>
    <property type="match status" value="1"/>
</dbReference>
<dbReference type="Gene3D" id="1.20.1250.20">
    <property type="entry name" value="MFS general substrate transporter like domains"/>
    <property type="match status" value="1"/>
</dbReference>
<dbReference type="HAMAP" id="MF_01436">
    <property type="entry name" value="MFS_EntS"/>
    <property type="match status" value="1"/>
</dbReference>
<dbReference type="InterPro" id="IPR023722">
    <property type="entry name" value="Enterobactin_exp_EntS"/>
</dbReference>
<dbReference type="InterPro" id="IPR020846">
    <property type="entry name" value="MFS_dom"/>
</dbReference>
<dbReference type="InterPro" id="IPR036259">
    <property type="entry name" value="MFS_trans_sf"/>
</dbReference>
<dbReference type="InterPro" id="IPR010290">
    <property type="entry name" value="TM_effector"/>
</dbReference>
<dbReference type="NCBIfam" id="NF007792">
    <property type="entry name" value="PRK10489.1"/>
    <property type="match status" value="1"/>
</dbReference>
<dbReference type="PANTHER" id="PTHR23513:SF9">
    <property type="entry name" value="ENTEROBACTIN EXPORTER ENTS"/>
    <property type="match status" value="1"/>
</dbReference>
<dbReference type="PANTHER" id="PTHR23513">
    <property type="entry name" value="INTEGRAL MEMBRANE EFFLUX PROTEIN-RELATED"/>
    <property type="match status" value="1"/>
</dbReference>
<dbReference type="Pfam" id="PF05977">
    <property type="entry name" value="MFS_3"/>
    <property type="match status" value="1"/>
</dbReference>
<dbReference type="SUPFAM" id="SSF103473">
    <property type="entry name" value="MFS general substrate transporter"/>
    <property type="match status" value="1"/>
</dbReference>
<dbReference type="PROSITE" id="PS50850">
    <property type="entry name" value="MFS"/>
    <property type="match status" value="1"/>
</dbReference>
<feature type="chain" id="PRO_0000227651" description="Enterobactin exporter EntS">
    <location>
        <begin position="1"/>
        <end position="414"/>
    </location>
</feature>
<feature type="topological domain" description="Cytoplasmic" evidence="1">
    <location>
        <begin position="1"/>
        <end position="21"/>
    </location>
</feature>
<feature type="transmembrane region" description="Helical" evidence="1">
    <location>
        <begin position="22"/>
        <end position="42"/>
    </location>
</feature>
<feature type="topological domain" description="Periplasmic" evidence="1">
    <location>
        <begin position="43"/>
        <end position="55"/>
    </location>
</feature>
<feature type="transmembrane region" description="Helical" evidence="1">
    <location>
        <begin position="56"/>
        <end position="76"/>
    </location>
</feature>
<feature type="topological domain" description="Cytoplasmic" evidence="1">
    <location>
        <begin position="77"/>
        <end position="83"/>
    </location>
</feature>
<feature type="transmembrane region" description="Helical" evidence="1">
    <location>
        <begin position="84"/>
        <end position="104"/>
    </location>
</feature>
<feature type="topological domain" description="Periplasmic" evidence="1">
    <location>
        <begin position="105"/>
        <end position="109"/>
    </location>
</feature>
<feature type="transmembrane region" description="Helical" evidence="1">
    <location>
        <begin position="110"/>
        <end position="130"/>
    </location>
</feature>
<feature type="topological domain" description="Cytoplasmic" evidence="1">
    <location>
        <begin position="131"/>
        <end position="156"/>
    </location>
</feature>
<feature type="transmembrane region" description="Helical" evidence="1">
    <location>
        <begin position="157"/>
        <end position="177"/>
    </location>
</feature>
<feature type="topological domain" description="Periplasmic" evidence="1">
    <location>
        <position position="178"/>
    </location>
</feature>
<feature type="transmembrane region" description="Helical" evidence="1">
    <location>
        <begin position="179"/>
        <end position="199"/>
    </location>
</feature>
<feature type="topological domain" description="Cytoplasmic" evidence="1">
    <location>
        <begin position="200"/>
        <end position="218"/>
    </location>
</feature>
<feature type="transmembrane region" description="Helical" evidence="1">
    <location>
        <begin position="219"/>
        <end position="239"/>
    </location>
</feature>
<feature type="topological domain" description="Periplasmic" evidence="1">
    <location>
        <begin position="240"/>
        <end position="256"/>
    </location>
</feature>
<feature type="transmembrane region" description="Helical" evidence="1">
    <location>
        <begin position="257"/>
        <end position="277"/>
    </location>
</feature>
<feature type="topological domain" description="Cytoplasmic" evidence="1">
    <location>
        <begin position="278"/>
        <end position="287"/>
    </location>
</feature>
<feature type="transmembrane region" description="Helical" evidence="1">
    <location>
        <begin position="288"/>
        <end position="307"/>
    </location>
</feature>
<feature type="topological domain" description="Periplasmic" evidence="1">
    <location>
        <begin position="308"/>
        <end position="313"/>
    </location>
</feature>
<feature type="transmembrane region" description="Helical" evidence="1">
    <location>
        <begin position="314"/>
        <end position="336"/>
    </location>
</feature>
<feature type="topological domain" description="Cytoplasmic" evidence="1">
    <location>
        <begin position="337"/>
        <end position="356"/>
    </location>
</feature>
<feature type="transmembrane region" description="Helical" evidence="1">
    <location>
        <begin position="357"/>
        <end position="377"/>
    </location>
</feature>
<feature type="topological domain" description="Periplasmic" evidence="1">
    <location>
        <position position="378"/>
    </location>
</feature>
<feature type="transmembrane region" description="Helical" evidence="1">
    <location>
        <begin position="379"/>
        <end position="399"/>
    </location>
</feature>
<feature type="topological domain" description="Cytoplasmic" evidence="1">
    <location>
        <begin position="400"/>
        <end position="414"/>
    </location>
</feature>
<evidence type="ECO:0000255" key="1">
    <source>
        <dbReference type="HAMAP-Rule" id="MF_01436"/>
    </source>
</evidence>
<keyword id="KW-0997">Cell inner membrane</keyword>
<keyword id="KW-1003">Cell membrane</keyword>
<keyword id="KW-0472">Membrane</keyword>
<keyword id="KW-0812">Transmembrane</keyword>
<keyword id="KW-1133">Transmembrane helix</keyword>
<keyword id="KW-0813">Transport</keyword>
<name>ENTS_SALCH</name>
<comment type="function">
    <text evidence="1">Component of an export pathway for enterobactin.</text>
</comment>
<comment type="subcellular location">
    <subcellularLocation>
        <location evidence="1">Cell inner membrane</location>
        <topology evidence="1">Multi-pass membrane protein</topology>
    </subcellularLocation>
</comment>
<comment type="similarity">
    <text evidence="1">Belongs to the major facilitator superfamily. EntS (TC 2.A.1.38) family.</text>
</comment>
<organism>
    <name type="scientific">Salmonella choleraesuis (strain SC-B67)</name>
    <dbReference type="NCBI Taxonomy" id="321314"/>
    <lineage>
        <taxon>Bacteria</taxon>
        <taxon>Pseudomonadati</taxon>
        <taxon>Pseudomonadota</taxon>
        <taxon>Gammaproteobacteria</taxon>
        <taxon>Enterobacterales</taxon>
        <taxon>Enterobacteriaceae</taxon>
        <taxon>Salmonella</taxon>
    </lineage>
</organism>
<reference key="1">
    <citation type="journal article" date="2005" name="Nucleic Acids Res.">
        <title>The genome sequence of Salmonella enterica serovar Choleraesuis, a highly invasive and resistant zoonotic pathogen.</title>
        <authorList>
            <person name="Chiu C.-H."/>
            <person name="Tang P."/>
            <person name="Chu C."/>
            <person name="Hu S."/>
            <person name="Bao Q."/>
            <person name="Yu J."/>
            <person name="Chou Y.-Y."/>
            <person name="Wang H.-S."/>
            <person name="Lee Y.-S."/>
        </authorList>
    </citation>
    <scope>NUCLEOTIDE SEQUENCE [LARGE SCALE GENOMIC DNA]</scope>
    <source>
        <strain>SC-B67</strain>
    </source>
</reference>
<protein>
    <recommendedName>
        <fullName evidence="1">Enterobactin exporter EntS</fullName>
    </recommendedName>
</protein>
<sequence length="414" mass="43093">MNRQSWLLNLSLLKTHPAFRAVFLARFISIVSLGLLGVAVPVQIQMMTHSTWQVGLSVTLTGGAMFIGLMVGGVLADRYERKKVILLARGTCGIGFIGLCVNSLLPEPSLLAIYLLGLWDGFFASLGVTALLAATPALVGRENLMQAGAITMLTVRLGSVISPMLGGILLASGGVAWNYGLAAAGTFITLLPLLTLPRLPVPPQPRENPFIALLAAFRFLLASPLIGGIALLGGLVTMASAVRVLYPALAMSWQMSAAQIGLLYAAIPLGAAIGALTSGQLAHSVRPGLIMLVSTVGSFLAVGLFAIMPVWTAGVICLALFGWLSAISSLLQYTLLQTQTPENMLGRMNGLWTAQNVTGDAIGAALLGGLGAMMTPVASASVSGFGLVIIGLLLLLVLGELRRFRQTPPVSDAG</sequence>